<dbReference type="EMBL" id="CP000319">
    <property type="protein sequence ID" value="ABE63517.1"/>
    <property type="molecule type" value="Genomic_DNA"/>
</dbReference>
<dbReference type="RefSeq" id="WP_011511183.1">
    <property type="nucleotide sequence ID" value="NC_007964.1"/>
</dbReference>
<dbReference type="STRING" id="323097.Nham_2738"/>
<dbReference type="KEGG" id="nha:Nham_2738"/>
<dbReference type="eggNOG" id="COG5487">
    <property type="taxonomic scope" value="Bacteria"/>
</dbReference>
<dbReference type="HOGENOM" id="CLU_187346_2_1_5"/>
<dbReference type="Proteomes" id="UP000001953">
    <property type="component" value="Chromosome"/>
</dbReference>
<dbReference type="GO" id="GO:0005886">
    <property type="term" value="C:plasma membrane"/>
    <property type="evidence" value="ECO:0007669"/>
    <property type="project" value="UniProtKB-SubCell"/>
</dbReference>
<dbReference type="HAMAP" id="MF_01361">
    <property type="entry name" value="UPF0391"/>
    <property type="match status" value="1"/>
</dbReference>
<dbReference type="InterPro" id="IPR009760">
    <property type="entry name" value="DUF1328"/>
</dbReference>
<dbReference type="NCBIfam" id="NF010226">
    <property type="entry name" value="PRK13682.1-1"/>
    <property type="match status" value="1"/>
</dbReference>
<dbReference type="NCBIfam" id="NF010228">
    <property type="entry name" value="PRK13682.1-3"/>
    <property type="match status" value="1"/>
</dbReference>
<dbReference type="NCBIfam" id="NF010229">
    <property type="entry name" value="PRK13682.1-4"/>
    <property type="match status" value="1"/>
</dbReference>
<dbReference type="Pfam" id="PF07043">
    <property type="entry name" value="DUF1328"/>
    <property type="match status" value="1"/>
</dbReference>
<dbReference type="PIRSF" id="PIRSF036466">
    <property type="entry name" value="UCP036466"/>
    <property type="match status" value="1"/>
</dbReference>
<name>Y2738_NITHX</name>
<protein>
    <recommendedName>
        <fullName evidence="1">UPF0391 membrane protein Nham_2738</fullName>
    </recommendedName>
</protein>
<comment type="subcellular location">
    <subcellularLocation>
        <location evidence="1">Cell membrane</location>
        <topology evidence="1">Multi-pass membrane protein</topology>
    </subcellularLocation>
</comment>
<comment type="similarity">
    <text evidence="1">Belongs to the UPF0391 family.</text>
</comment>
<feature type="chain" id="PRO_0000256750" description="UPF0391 membrane protein Nham_2738">
    <location>
        <begin position="1"/>
        <end position="57"/>
    </location>
</feature>
<feature type="transmembrane region" description="Helical" evidence="1">
    <location>
        <begin position="4"/>
        <end position="24"/>
    </location>
</feature>
<feature type="transmembrane region" description="Helical" evidence="1">
    <location>
        <begin position="30"/>
        <end position="50"/>
    </location>
</feature>
<keyword id="KW-1003">Cell membrane</keyword>
<keyword id="KW-0472">Membrane</keyword>
<keyword id="KW-1185">Reference proteome</keyword>
<keyword id="KW-0812">Transmembrane</keyword>
<keyword id="KW-1133">Transmembrane helix</keyword>
<organism>
    <name type="scientific">Nitrobacter hamburgensis (strain DSM 10229 / NCIMB 13809 / X14)</name>
    <dbReference type="NCBI Taxonomy" id="323097"/>
    <lineage>
        <taxon>Bacteria</taxon>
        <taxon>Pseudomonadati</taxon>
        <taxon>Pseudomonadota</taxon>
        <taxon>Alphaproteobacteria</taxon>
        <taxon>Hyphomicrobiales</taxon>
        <taxon>Nitrobacteraceae</taxon>
        <taxon>Nitrobacter</taxon>
    </lineage>
</organism>
<accession>Q1QJT0</accession>
<gene>
    <name type="ordered locus">Nham_2738</name>
</gene>
<evidence type="ECO:0000255" key="1">
    <source>
        <dbReference type="HAMAP-Rule" id="MF_01361"/>
    </source>
</evidence>
<reference key="1">
    <citation type="submission" date="2006-03" db="EMBL/GenBank/DDBJ databases">
        <title>Complete sequence of chromosome of Nitrobacter hamburgensis X14.</title>
        <authorList>
            <consortium name="US DOE Joint Genome Institute"/>
            <person name="Copeland A."/>
            <person name="Lucas S."/>
            <person name="Lapidus A."/>
            <person name="Barry K."/>
            <person name="Detter J.C."/>
            <person name="Glavina del Rio T."/>
            <person name="Hammon N."/>
            <person name="Israni S."/>
            <person name="Dalin E."/>
            <person name="Tice H."/>
            <person name="Pitluck S."/>
            <person name="Chain P."/>
            <person name="Malfatti S."/>
            <person name="Shin M."/>
            <person name="Vergez L."/>
            <person name="Schmutz J."/>
            <person name="Larimer F."/>
            <person name="Land M."/>
            <person name="Hauser L."/>
            <person name="Kyrpides N."/>
            <person name="Ivanova N."/>
            <person name="Ward B."/>
            <person name="Arp D."/>
            <person name="Klotz M."/>
            <person name="Stein L."/>
            <person name="O'Mullan G."/>
            <person name="Starkenburg S."/>
            <person name="Sayavedra L."/>
            <person name="Poret-Peterson A.T."/>
            <person name="Gentry M.E."/>
            <person name="Bruce D."/>
            <person name="Richardson P."/>
        </authorList>
    </citation>
    <scope>NUCLEOTIDE SEQUENCE [LARGE SCALE GENOMIC DNA]</scope>
    <source>
        <strain>DSM 10229 / NCIMB 13809 / X14</strain>
    </source>
</reference>
<sequence>MLSWVVTFLIIALIAGILGFGGLAGASVEIAKIIFFIAVILFVVSAVVGLLRGRTRV</sequence>
<proteinExistence type="inferred from homology"/>